<dbReference type="EMBL" id="BA000049">
    <property type="protein sequence ID" value="BAE56440.1"/>
    <property type="molecule type" value="Genomic_DNA"/>
</dbReference>
<dbReference type="RefSeq" id="XP_001818442.1">
    <property type="nucleotide sequence ID" value="XM_001818390.2"/>
</dbReference>
<dbReference type="SMR" id="Q2UPS5"/>
<dbReference type="STRING" id="510516.Q2UPS5"/>
<dbReference type="EnsemblFungi" id="BAE56440">
    <property type="protein sequence ID" value="BAE56440"/>
    <property type="gene ID" value="AO090005001528"/>
</dbReference>
<dbReference type="GeneID" id="5990387"/>
<dbReference type="KEGG" id="aor:AO090005001528"/>
<dbReference type="VEuPathDB" id="FungiDB:AO090005001528"/>
<dbReference type="HOGENOM" id="CLU_031058_1_0_1"/>
<dbReference type="OMA" id="AWDKPRL"/>
<dbReference type="OrthoDB" id="63771at5052"/>
<dbReference type="Proteomes" id="UP000006564">
    <property type="component" value="Chromosome 1"/>
</dbReference>
<dbReference type="GO" id="GO:0005829">
    <property type="term" value="C:cytosol"/>
    <property type="evidence" value="ECO:0007669"/>
    <property type="project" value="TreeGrafter"/>
</dbReference>
<dbReference type="GO" id="GO:0005634">
    <property type="term" value="C:nucleus"/>
    <property type="evidence" value="ECO:0007669"/>
    <property type="project" value="TreeGrafter"/>
</dbReference>
<dbReference type="GO" id="GO:0046872">
    <property type="term" value="F:metal ion binding"/>
    <property type="evidence" value="ECO:0007669"/>
    <property type="project" value="UniProtKB-KW"/>
</dbReference>
<dbReference type="GO" id="GO:0000224">
    <property type="term" value="F:peptide-N4-(N-acetyl-beta-glucosaminyl)asparagine amidase activity"/>
    <property type="evidence" value="ECO:0007669"/>
    <property type="project" value="TreeGrafter"/>
</dbReference>
<dbReference type="GO" id="GO:0006516">
    <property type="term" value="P:glycoprotein catabolic process"/>
    <property type="evidence" value="ECO:0007669"/>
    <property type="project" value="TreeGrafter"/>
</dbReference>
<dbReference type="FunFam" id="3.10.620.30:FF:000004">
    <property type="entry name" value="Peptidase (PNG1)"/>
    <property type="match status" value="1"/>
</dbReference>
<dbReference type="FunFam" id="2.20.25.10:FF:000011">
    <property type="entry name" value="peptide-N(4)-(N-acetyl-beta- glucosaminyl)asparagine amidase"/>
    <property type="match status" value="1"/>
</dbReference>
<dbReference type="Gene3D" id="2.20.25.10">
    <property type="match status" value="1"/>
</dbReference>
<dbReference type="Gene3D" id="3.10.620.30">
    <property type="match status" value="1"/>
</dbReference>
<dbReference type="InterPro" id="IPR038765">
    <property type="entry name" value="Papain-like_cys_pep_sf"/>
</dbReference>
<dbReference type="InterPro" id="IPR050883">
    <property type="entry name" value="PNGase"/>
</dbReference>
<dbReference type="InterPro" id="IPR002931">
    <property type="entry name" value="Transglutaminase-like"/>
</dbReference>
<dbReference type="PANTHER" id="PTHR12143">
    <property type="entry name" value="PEPTIDE N-GLYCANASE PNGASE -RELATED"/>
    <property type="match status" value="1"/>
</dbReference>
<dbReference type="PANTHER" id="PTHR12143:SF19">
    <property type="entry name" value="PEPTIDE-N(4)-(N-ACETYL-BETA-GLUCOSAMINYL)ASPARAGINE AMIDASE"/>
    <property type="match status" value="1"/>
</dbReference>
<dbReference type="Pfam" id="PF01841">
    <property type="entry name" value="Transglut_core"/>
    <property type="match status" value="1"/>
</dbReference>
<dbReference type="SMART" id="SM00460">
    <property type="entry name" value="TGc"/>
    <property type="match status" value="1"/>
</dbReference>
<dbReference type="SUPFAM" id="SSF54001">
    <property type="entry name" value="Cysteine proteinases"/>
    <property type="match status" value="1"/>
</dbReference>
<protein>
    <recommendedName>
        <fullName>Protein png1</fullName>
    </recommendedName>
</protein>
<keyword id="KW-0479">Metal-binding</keyword>
<keyword id="KW-1185">Reference proteome</keyword>
<keyword id="KW-0862">Zinc</keyword>
<organism>
    <name type="scientific">Aspergillus oryzae (strain ATCC 42149 / RIB 40)</name>
    <name type="common">Yellow koji mold</name>
    <dbReference type="NCBI Taxonomy" id="510516"/>
    <lineage>
        <taxon>Eukaryota</taxon>
        <taxon>Fungi</taxon>
        <taxon>Dikarya</taxon>
        <taxon>Ascomycota</taxon>
        <taxon>Pezizomycotina</taxon>
        <taxon>Eurotiomycetes</taxon>
        <taxon>Eurotiomycetidae</taxon>
        <taxon>Eurotiales</taxon>
        <taxon>Aspergillaceae</taxon>
        <taxon>Aspergillus</taxon>
        <taxon>Aspergillus subgen. Circumdati</taxon>
    </lineage>
</organism>
<gene>
    <name type="primary">png1</name>
    <name type="ORF">AO090005001528</name>
</gene>
<accession>Q2UPS5</accession>
<proteinExistence type="inferred from homology"/>
<reference key="1">
    <citation type="journal article" date="2005" name="Nature">
        <title>Genome sequencing and analysis of Aspergillus oryzae.</title>
        <authorList>
            <person name="Machida M."/>
            <person name="Asai K."/>
            <person name="Sano M."/>
            <person name="Tanaka T."/>
            <person name="Kumagai T."/>
            <person name="Terai G."/>
            <person name="Kusumoto K."/>
            <person name="Arima T."/>
            <person name="Akita O."/>
            <person name="Kashiwagi Y."/>
            <person name="Abe K."/>
            <person name="Gomi K."/>
            <person name="Horiuchi H."/>
            <person name="Kitamoto K."/>
            <person name="Kobayashi T."/>
            <person name="Takeuchi M."/>
            <person name="Denning D.W."/>
            <person name="Galagan J.E."/>
            <person name="Nierman W.C."/>
            <person name="Yu J."/>
            <person name="Archer D.B."/>
            <person name="Bennett J.W."/>
            <person name="Bhatnagar D."/>
            <person name="Cleveland T.E."/>
            <person name="Fedorova N.D."/>
            <person name="Gotoh O."/>
            <person name="Horikawa H."/>
            <person name="Hosoyama A."/>
            <person name="Ichinomiya M."/>
            <person name="Igarashi R."/>
            <person name="Iwashita K."/>
            <person name="Juvvadi P.R."/>
            <person name="Kato M."/>
            <person name="Kato Y."/>
            <person name="Kin T."/>
            <person name="Kokubun A."/>
            <person name="Maeda H."/>
            <person name="Maeyama N."/>
            <person name="Maruyama J."/>
            <person name="Nagasaki H."/>
            <person name="Nakajima T."/>
            <person name="Oda K."/>
            <person name="Okada K."/>
            <person name="Paulsen I."/>
            <person name="Sakamoto K."/>
            <person name="Sawano T."/>
            <person name="Takahashi M."/>
            <person name="Takase K."/>
            <person name="Terabayashi Y."/>
            <person name="Wortman J.R."/>
            <person name="Yamada O."/>
            <person name="Yamagata Y."/>
            <person name="Anazawa H."/>
            <person name="Hata Y."/>
            <person name="Koide Y."/>
            <person name="Komori T."/>
            <person name="Koyama Y."/>
            <person name="Minetoki T."/>
            <person name="Suharnan S."/>
            <person name="Tanaka A."/>
            <person name="Isono K."/>
            <person name="Kuhara S."/>
            <person name="Ogasawara N."/>
            <person name="Kikuchi H."/>
        </authorList>
    </citation>
    <scope>NUCLEOTIDE SEQUENCE [LARGE SCALE GENOMIC DNA]</scope>
    <source>
        <strain>ATCC 42149 / RIB 40</strain>
    </source>
</reference>
<name>PNG1_ASPOR</name>
<feature type="chain" id="PRO_0000248985" description="Protein png1">
    <location>
        <begin position="1"/>
        <end position="457"/>
    </location>
</feature>
<feature type="region of interest" description="Disordered" evidence="2">
    <location>
        <begin position="30"/>
        <end position="111"/>
    </location>
</feature>
<feature type="region of interest" description="Disordered" evidence="2">
    <location>
        <begin position="410"/>
        <end position="457"/>
    </location>
</feature>
<feature type="compositionally biased region" description="Pro residues" evidence="2">
    <location>
        <begin position="61"/>
        <end position="86"/>
    </location>
</feature>
<feature type="compositionally biased region" description="Low complexity" evidence="2">
    <location>
        <begin position="87"/>
        <end position="98"/>
    </location>
</feature>
<feature type="binding site" evidence="1">
    <location>
        <position position="201"/>
    </location>
    <ligand>
        <name>Zn(2+)</name>
        <dbReference type="ChEBI" id="CHEBI:29105"/>
    </ligand>
</feature>
<feature type="binding site" evidence="1">
    <location>
        <position position="204"/>
    </location>
    <ligand>
        <name>Zn(2+)</name>
        <dbReference type="ChEBI" id="CHEBI:29105"/>
    </ligand>
</feature>
<feature type="binding site" evidence="1">
    <location>
        <position position="233"/>
    </location>
    <ligand>
        <name>Zn(2+)</name>
        <dbReference type="ChEBI" id="CHEBI:29105"/>
    </ligand>
</feature>
<feature type="binding site" evidence="1">
    <location>
        <position position="238"/>
    </location>
    <ligand>
        <name>Zn(2+)</name>
        <dbReference type="ChEBI" id="CHEBI:29105"/>
    </ligand>
</feature>
<comment type="similarity">
    <text evidence="3">Belongs to the transglutaminase-like superfamily. PNGase family.</text>
</comment>
<comment type="caution">
    <text evidence="3">Although strongly related to the peptide:N-glycanase enzyme, it lacks the conserved active site Cys in position 259, which is replaced by a Val residue suggesting that it has no activity.</text>
</comment>
<evidence type="ECO:0000250" key="1"/>
<evidence type="ECO:0000256" key="2">
    <source>
        <dbReference type="SAM" id="MobiDB-lite"/>
    </source>
</evidence>
<evidence type="ECO:0000305" key="3"/>
<sequence>MADSIHHSQRAQGSNNFDVSELTNAFEQLMRNKRFHRLQEHSRARTHSPSPSPSQVSSPGPYAPPHPSRAPPPPPTAAPFQPPQYPQQPQQYPSNQSSMLQGLPIVPSPPQDQASLKFRNLLHVLSVTPTKYENPGLLDEALSLIPLDRLYSEAEEESQILQAQAASVGGRPEWGYQDCVIRSLLRWFKGSFFQFVNNPPCSRCFRPTIAQGNTPPLPDETARGATRVELYRCSEMSCGAYERFPRYSDVWQLLQSRRGRVGEWANCFSMFCRALGGRVRWVWNSEDYVWTEIYSEHQRRWVHVDACEGAWDQPRLYAEGWGRKMSYCIAFSIDGATDVTRRYVRSSAKHGAARNRAPEEVVHWVILEIRRKRRENLSKTDQKRLMKEDEREEKELRHYTASALAAELNNLLPQNQTTGRLDEQKTPVSRQEAAAEWLAASQRNSGHSGPDHSQGGR</sequence>